<proteinExistence type="inferred from homology"/>
<accession>C5E490</accession>
<accession>B2G4F8</accession>
<name>SWM2_ZYGRC</name>
<dbReference type="EMBL" id="AM989984">
    <property type="protein sequence ID" value="CAQ43467.1"/>
    <property type="molecule type" value="Genomic_DNA"/>
</dbReference>
<dbReference type="EMBL" id="CU928181">
    <property type="protein sequence ID" value="CAR30851.1"/>
    <property type="molecule type" value="Genomic_DNA"/>
</dbReference>
<dbReference type="RefSeq" id="XP_002499106.1">
    <property type="nucleotide sequence ID" value="XM_002499061.1"/>
</dbReference>
<dbReference type="SMR" id="C5E490"/>
<dbReference type="FunCoup" id="C5E490">
    <property type="interactions" value="20"/>
</dbReference>
<dbReference type="GeneID" id="8204651"/>
<dbReference type="KEGG" id="zro:ZYRO0E03894g"/>
<dbReference type="HOGENOM" id="CLU_147530_0_0_1"/>
<dbReference type="InParanoid" id="C5E490"/>
<dbReference type="Proteomes" id="UP000008536">
    <property type="component" value="Chromosome E"/>
</dbReference>
<dbReference type="GO" id="GO:0005730">
    <property type="term" value="C:nucleolus"/>
    <property type="evidence" value="ECO:0007669"/>
    <property type="project" value="UniProtKB-SubCell"/>
</dbReference>
<dbReference type="InterPro" id="IPR031391">
    <property type="entry name" value="Swm2"/>
</dbReference>
<dbReference type="Pfam" id="PF17083">
    <property type="entry name" value="Swm2"/>
    <property type="match status" value="1"/>
</dbReference>
<gene>
    <name type="primary">SWM2</name>
    <name type="ordered locus">ZYRO0E03894g</name>
    <name type="ORF">Zrou_5p49</name>
</gene>
<keyword id="KW-0539">Nucleus</keyword>
<keyword id="KW-1185">Reference proteome</keyword>
<feature type="chain" id="PRO_0000405680" description="Nucleolar protein SWM2">
    <location>
        <begin position="1"/>
        <end position="121"/>
    </location>
</feature>
<reference key="1">
    <citation type="submission" date="2008-02" db="EMBL/GenBank/DDBJ databases">
        <title>Zygosaccharomyces rouxii homologs of Saccharomyces cerevisiae chromosome III.</title>
        <authorList>
            <person name="Gordon J.L."/>
            <person name="Wolfe K.H."/>
        </authorList>
    </citation>
    <scope>NUCLEOTIDE SEQUENCE [LARGE SCALE GENOMIC DNA]</scope>
    <source>
        <strain>ATCC 2623 / CBS 732 / BCRC 21506 / NBRC 1130 / NCYC 568 / NRRL Y-229</strain>
    </source>
</reference>
<reference key="2">
    <citation type="journal article" date="2009" name="Genome Res.">
        <title>Comparative genomics of protoploid Saccharomycetaceae.</title>
        <authorList>
            <consortium name="The Genolevures Consortium"/>
            <person name="Souciet J.-L."/>
            <person name="Dujon B."/>
            <person name="Gaillardin C."/>
            <person name="Johnston M."/>
            <person name="Baret P.V."/>
            <person name="Cliften P."/>
            <person name="Sherman D.J."/>
            <person name="Weissenbach J."/>
            <person name="Westhof E."/>
            <person name="Wincker P."/>
            <person name="Jubin C."/>
            <person name="Poulain J."/>
            <person name="Barbe V."/>
            <person name="Segurens B."/>
            <person name="Artiguenave F."/>
            <person name="Anthouard V."/>
            <person name="Vacherie B."/>
            <person name="Val M.-E."/>
            <person name="Fulton R.S."/>
            <person name="Minx P."/>
            <person name="Wilson R."/>
            <person name="Durrens P."/>
            <person name="Jean G."/>
            <person name="Marck C."/>
            <person name="Martin T."/>
            <person name="Nikolski M."/>
            <person name="Rolland T."/>
            <person name="Seret M.-L."/>
            <person name="Casaregola S."/>
            <person name="Despons L."/>
            <person name="Fairhead C."/>
            <person name="Fischer G."/>
            <person name="Lafontaine I."/>
            <person name="Leh V."/>
            <person name="Lemaire M."/>
            <person name="de Montigny J."/>
            <person name="Neuveglise C."/>
            <person name="Thierry A."/>
            <person name="Blanc-Lenfle I."/>
            <person name="Bleykasten C."/>
            <person name="Diffels J."/>
            <person name="Fritsch E."/>
            <person name="Frangeul L."/>
            <person name="Goeffon A."/>
            <person name="Jauniaux N."/>
            <person name="Kachouri-Lafond R."/>
            <person name="Payen C."/>
            <person name="Potier S."/>
            <person name="Pribylova L."/>
            <person name="Ozanne C."/>
            <person name="Richard G.-F."/>
            <person name="Sacerdot C."/>
            <person name="Straub M.-L."/>
            <person name="Talla E."/>
        </authorList>
    </citation>
    <scope>NUCLEOTIDE SEQUENCE [LARGE SCALE GENOMIC DNA]</scope>
    <source>
        <strain>ATCC 2623 / CBS 732 / BCRC 21506 / NBRC 1130 / NCYC 568 / NRRL Y-229</strain>
    </source>
</reference>
<evidence type="ECO:0000250" key="1"/>
<evidence type="ECO:0000305" key="2"/>
<comment type="subcellular location">
    <subcellularLocation>
        <location evidence="1">Nucleus</location>
        <location evidence="1">Nucleolus</location>
    </subcellularLocation>
</comment>
<comment type="similarity">
    <text evidence="2">Belongs to the SWM2 family.</text>
</comment>
<sequence length="121" mass="13979">MDLKFVIDNLQDLGVLPPDQSLTLGSQYQLIARDEQLSQKAIDKCEKVFLQWSLNRGVNIEVLKRFQNLWSVIKGKDFPLVGFPYSNLTIQQVDVNQYISNQSEKLMKNLTVEEVEITDYV</sequence>
<organism>
    <name type="scientific">Zygosaccharomyces rouxii (strain ATCC 2623 / CBS 732 / NBRC 1130 / NCYC 568 / NRRL Y-229)</name>
    <dbReference type="NCBI Taxonomy" id="559307"/>
    <lineage>
        <taxon>Eukaryota</taxon>
        <taxon>Fungi</taxon>
        <taxon>Dikarya</taxon>
        <taxon>Ascomycota</taxon>
        <taxon>Saccharomycotina</taxon>
        <taxon>Saccharomycetes</taxon>
        <taxon>Saccharomycetales</taxon>
        <taxon>Saccharomycetaceae</taxon>
        <taxon>Zygosaccharomyces</taxon>
    </lineage>
</organism>
<protein>
    <recommendedName>
        <fullName>Nucleolar protein SWM2</fullName>
    </recommendedName>
</protein>